<feature type="chain" id="PRO_0000415768" description="Polyadenylate-binding protein RBP47B'">
    <location>
        <begin position="1"/>
        <end position="425"/>
    </location>
</feature>
<feature type="domain" description="RRM 1" evidence="2">
    <location>
        <begin position="24"/>
        <end position="102"/>
    </location>
</feature>
<feature type="domain" description="RRM 2" evidence="2">
    <location>
        <begin position="116"/>
        <end position="195"/>
    </location>
</feature>
<feature type="domain" description="RRM 3" evidence="2">
    <location>
        <begin position="237"/>
        <end position="309"/>
    </location>
</feature>
<feature type="splice variant" id="VSP_042355" description="In isoform 2." evidence="3">
    <location>
        <begin position="209"/>
        <end position="212"/>
    </location>
</feature>
<sequence length="425" mass="46597">MAMMHPPQPPQGSYHHPQTLEEVRTLWIGDLQYWVDENYLTSCFSQTGELVSVKVIRNKITGQPEGYGFIEFISHAAAERTLQTYNGTQMPGTELTFRLNWASFGSGQKVDAGPDHSIFVGDLAPDVTDYLLQETFRVHYSSVRGAKVVTDPSTGRSKGYGFVKFAEESERNRAMAEMNGLYCSTRPMRISAATPKKNVGVQQQYVTKAVYPVTVPSAVAAPVQAYVAPPESDVTCTTISVANLDQNVTEEELKKAFSQLGEVIYVKIPATKGYGYVQFKTRPSAEEAVQRMQGQVIGQQAVRISWSKNPGQDGWVTQADPNQWNGYYGYGQGYDAYAYGATQDPSVYAYGGYGYPQYPQQGEGTQDISNSAAGGVAGAEQELYDPLATPDVDKLNAAYLSVHASAILGRPMWQRTSSLTSQLGK</sequence>
<gene>
    <name type="primary">RBP47B'</name>
    <name type="ordered locus">At5g19350</name>
    <name type="ORF">F7K24.100</name>
</gene>
<keyword id="KW-0025">Alternative splicing</keyword>
<keyword id="KW-0507">mRNA processing</keyword>
<keyword id="KW-0539">Nucleus</keyword>
<keyword id="KW-1185">Reference proteome</keyword>
<keyword id="KW-0677">Repeat</keyword>
<keyword id="KW-0694">RNA-binding</keyword>
<evidence type="ECO:0000250" key="1"/>
<evidence type="ECO:0000255" key="2">
    <source>
        <dbReference type="PROSITE-ProRule" id="PRU00176"/>
    </source>
</evidence>
<evidence type="ECO:0000305" key="3"/>
<reference key="1">
    <citation type="journal article" date="2000" name="Nature">
        <title>Sequence and analysis of chromosome 5 of the plant Arabidopsis thaliana.</title>
        <authorList>
            <person name="Tabata S."/>
            <person name="Kaneko T."/>
            <person name="Nakamura Y."/>
            <person name="Kotani H."/>
            <person name="Kato T."/>
            <person name="Asamizu E."/>
            <person name="Miyajima N."/>
            <person name="Sasamoto S."/>
            <person name="Kimura T."/>
            <person name="Hosouchi T."/>
            <person name="Kawashima K."/>
            <person name="Kohara M."/>
            <person name="Matsumoto M."/>
            <person name="Matsuno A."/>
            <person name="Muraki A."/>
            <person name="Nakayama S."/>
            <person name="Nakazaki N."/>
            <person name="Naruo K."/>
            <person name="Okumura S."/>
            <person name="Shinpo S."/>
            <person name="Takeuchi C."/>
            <person name="Wada T."/>
            <person name="Watanabe A."/>
            <person name="Yamada M."/>
            <person name="Yasuda M."/>
            <person name="Sato S."/>
            <person name="de la Bastide M."/>
            <person name="Huang E."/>
            <person name="Spiegel L."/>
            <person name="Gnoj L."/>
            <person name="O'Shaughnessy A."/>
            <person name="Preston R."/>
            <person name="Habermann K."/>
            <person name="Murray J."/>
            <person name="Johnson D."/>
            <person name="Rohlfing T."/>
            <person name="Nelson J."/>
            <person name="Stoneking T."/>
            <person name="Pepin K."/>
            <person name="Spieth J."/>
            <person name="Sekhon M."/>
            <person name="Armstrong J."/>
            <person name="Becker M."/>
            <person name="Belter E."/>
            <person name="Cordum H."/>
            <person name="Cordes M."/>
            <person name="Courtney L."/>
            <person name="Courtney W."/>
            <person name="Dante M."/>
            <person name="Du H."/>
            <person name="Edwards J."/>
            <person name="Fryman J."/>
            <person name="Haakensen B."/>
            <person name="Lamar E."/>
            <person name="Latreille P."/>
            <person name="Leonard S."/>
            <person name="Meyer R."/>
            <person name="Mulvaney E."/>
            <person name="Ozersky P."/>
            <person name="Riley A."/>
            <person name="Strowmatt C."/>
            <person name="Wagner-McPherson C."/>
            <person name="Wollam A."/>
            <person name="Yoakum M."/>
            <person name="Bell M."/>
            <person name="Dedhia N."/>
            <person name="Parnell L."/>
            <person name="Shah R."/>
            <person name="Rodriguez M."/>
            <person name="Hoon See L."/>
            <person name="Vil D."/>
            <person name="Baker J."/>
            <person name="Kirchoff K."/>
            <person name="Toth K."/>
            <person name="King L."/>
            <person name="Bahret A."/>
            <person name="Miller B."/>
            <person name="Marra M.A."/>
            <person name="Martienssen R."/>
            <person name="McCombie W.R."/>
            <person name="Wilson R.K."/>
            <person name="Murphy G."/>
            <person name="Bancroft I."/>
            <person name="Volckaert G."/>
            <person name="Wambutt R."/>
            <person name="Duesterhoeft A."/>
            <person name="Stiekema W."/>
            <person name="Pohl T."/>
            <person name="Entian K.-D."/>
            <person name="Terryn N."/>
            <person name="Hartley N."/>
            <person name="Bent E."/>
            <person name="Johnson S."/>
            <person name="Langham S.-A."/>
            <person name="McCullagh B."/>
            <person name="Robben J."/>
            <person name="Grymonprez B."/>
            <person name="Zimmermann W."/>
            <person name="Ramsperger U."/>
            <person name="Wedler H."/>
            <person name="Balke K."/>
            <person name="Wedler E."/>
            <person name="Peters S."/>
            <person name="van Staveren M."/>
            <person name="Dirkse W."/>
            <person name="Mooijman P."/>
            <person name="Klein Lankhorst R."/>
            <person name="Weitzenegger T."/>
            <person name="Bothe G."/>
            <person name="Rose M."/>
            <person name="Hauf J."/>
            <person name="Berneiser S."/>
            <person name="Hempel S."/>
            <person name="Feldpausch M."/>
            <person name="Lamberth S."/>
            <person name="Villarroel R."/>
            <person name="Gielen J."/>
            <person name="Ardiles W."/>
            <person name="Bents O."/>
            <person name="Lemcke K."/>
            <person name="Kolesov G."/>
            <person name="Mayer K.F.X."/>
            <person name="Rudd S."/>
            <person name="Schoof H."/>
            <person name="Schueller C."/>
            <person name="Zaccaria P."/>
            <person name="Mewes H.-W."/>
            <person name="Bevan M."/>
            <person name="Fransz P.F."/>
        </authorList>
    </citation>
    <scope>NUCLEOTIDE SEQUENCE [LARGE SCALE GENOMIC DNA]</scope>
    <source>
        <strain>cv. Columbia</strain>
    </source>
</reference>
<reference key="2">
    <citation type="journal article" date="2017" name="Plant J.">
        <title>Araport11: a complete reannotation of the Arabidopsis thaliana reference genome.</title>
        <authorList>
            <person name="Cheng C.Y."/>
            <person name="Krishnakumar V."/>
            <person name="Chan A.P."/>
            <person name="Thibaud-Nissen F."/>
            <person name="Schobel S."/>
            <person name="Town C.D."/>
        </authorList>
    </citation>
    <scope>GENOME REANNOTATION</scope>
    <source>
        <strain>cv. Columbia</strain>
    </source>
</reference>
<reference key="3">
    <citation type="journal article" date="2003" name="Science">
        <title>Empirical analysis of transcriptional activity in the Arabidopsis genome.</title>
        <authorList>
            <person name="Yamada K."/>
            <person name="Lim J."/>
            <person name="Dale J.M."/>
            <person name="Chen H."/>
            <person name="Shinn P."/>
            <person name="Palm C.J."/>
            <person name="Southwick A.M."/>
            <person name="Wu H.C."/>
            <person name="Kim C.J."/>
            <person name="Nguyen M."/>
            <person name="Pham P.K."/>
            <person name="Cheuk R.F."/>
            <person name="Karlin-Newmann G."/>
            <person name="Liu S.X."/>
            <person name="Lam B."/>
            <person name="Sakano H."/>
            <person name="Wu T."/>
            <person name="Yu G."/>
            <person name="Miranda M."/>
            <person name="Quach H.L."/>
            <person name="Tripp M."/>
            <person name="Chang C.H."/>
            <person name="Lee J.M."/>
            <person name="Toriumi M.J."/>
            <person name="Chan M.M."/>
            <person name="Tang C.C."/>
            <person name="Onodera C.S."/>
            <person name="Deng J.M."/>
            <person name="Akiyama K."/>
            <person name="Ansari Y."/>
            <person name="Arakawa T."/>
            <person name="Banh J."/>
            <person name="Banno F."/>
            <person name="Bowser L."/>
            <person name="Brooks S.Y."/>
            <person name="Carninci P."/>
            <person name="Chao Q."/>
            <person name="Choy N."/>
            <person name="Enju A."/>
            <person name="Goldsmith A.D."/>
            <person name="Gurjal M."/>
            <person name="Hansen N.F."/>
            <person name="Hayashizaki Y."/>
            <person name="Johnson-Hopson C."/>
            <person name="Hsuan V.W."/>
            <person name="Iida K."/>
            <person name="Karnes M."/>
            <person name="Khan S."/>
            <person name="Koesema E."/>
            <person name="Ishida J."/>
            <person name="Jiang P.X."/>
            <person name="Jones T."/>
            <person name="Kawai J."/>
            <person name="Kamiya A."/>
            <person name="Meyers C."/>
            <person name="Nakajima M."/>
            <person name="Narusaka M."/>
            <person name="Seki M."/>
            <person name="Sakurai T."/>
            <person name="Satou M."/>
            <person name="Tamse R."/>
            <person name="Vaysberg M."/>
            <person name="Wallender E.K."/>
            <person name="Wong C."/>
            <person name="Yamamura Y."/>
            <person name="Yuan S."/>
            <person name="Shinozaki K."/>
            <person name="Davis R.W."/>
            <person name="Theologis A."/>
            <person name="Ecker J.R."/>
        </authorList>
    </citation>
    <scope>NUCLEOTIDE SEQUENCE [LARGE SCALE MRNA] (ISOFORM 1)</scope>
    <source>
        <strain>cv. Columbia</strain>
    </source>
</reference>
<reference key="4">
    <citation type="journal article" date="2011" name="Mol. Cells">
        <title>Phylogenetic and expression analysis of RNA-binding proteins with triple RNA recognition motifs in plants.</title>
        <authorList>
            <person name="Peal L."/>
            <person name="Jambunathan N."/>
            <person name="Mahalingam R."/>
        </authorList>
    </citation>
    <scope>GENE FAMILY</scope>
    <source>
        <strain>cv. Columbia</strain>
        <strain>cv. Wassilewskija</strain>
    </source>
</reference>
<proteinExistence type="evidence at transcript level"/>
<name>R47BP_ARATH</name>
<comment type="function">
    <text evidence="1">Heterogeneous nuclear ribonucleoprotein (hnRNP)-protein binding the poly(A) tail of mRNA and probably involved in some steps of pre-mRNA maturation.</text>
</comment>
<comment type="subunit">
    <text evidence="1">Interacts with the poly(A) tail of mRNA in nucleus.</text>
</comment>
<comment type="subcellular location">
    <subcellularLocation>
        <location evidence="1">Nucleus</location>
    </subcellularLocation>
    <subcellularLocation>
        <location evidence="1">Cytoplasmic granule</location>
    </subcellularLocation>
</comment>
<comment type="alternative products">
    <event type="alternative splicing"/>
    <isoform>
        <id>Q8VXZ9-1</id>
        <name>1</name>
        <sequence type="displayed"/>
    </isoform>
    <isoform>
        <id>Q8VXZ9-2</id>
        <name>2</name>
        <sequence type="described" ref="VSP_042355"/>
    </isoform>
</comment>
<comment type="similarity">
    <text evidence="3">Belongs to the polyadenylate-binding RBP47 family.</text>
</comment>
<dbReference type="EMBL" id="AF296837">
    <property type="status" value="NOT_ANNOTATED_CDS"/>
    <property type="molecule type" value="Genomic_DNA"/>
</dbReference>
<dbReference type="EMBL" id="CP002688">
    <property type="protein sequence ID" value="AED92689.1"/>
    <property type="molecule type" value="Genomic_DNA"/>
</dbReference>
<dbReference type="EMBL" id="CP002688">
    <property type="protein sequence ID" value="AED92690.1"/>
    <property type="molecule type" value="Genomic_DNA"/>
</dbReference>
<dbReference type="EMBL" id="AY074319">
    <property type="protein sequence ID" value="AAL67015.1"/>
    <property type="molecule type" value="mRNA"/>
</dbReference>
<dbReference type="EMBL" id="AY114004">
    <property type="protein sequence ID" value="AAM45052.1"/>
    <property type="molecule type" value="mRNA"/>
</dbReference>
<dbReference type="RefSeq" id="NP_001078604.1">
    <molecule id="Q8VXZ9-2"/>
    <property type="nucleotide sequence ID" value="NM_001085135.2"/>
</dbReference>
<dbReference type="RefSeq" id="NP_197436.1">
    <molecule id="Q8VXZ9-1"/>
    <property type="nucleotide sequence ID" value="NM_121940.5"/>
</dbReference>
<dbReference type="SMR" id="Q8VXZ9"/>
<dbReference type="BioGRID" id="17331">
    <property type="interactions" value="1"/>
</dbReference>
<dbReference type="FunCoup" id="Q8VXZ9">
    <property type="interactions" value="1463"/>
</dbReference>
<dbReference type="STRING" id="3702.Q8VXZ9"/>
<dbReference type="GlyGen" id="Q8VXZ9">
    <property type="glycosylation" value="1 site"/>
</dbReference>
<dbReference type="iPTMnet" id="Q8VXZ9"/>
<dbReference type="PaxDb" id="3702-AT5G19350.1"/>
<dbReference type="ProteomicsDB" id="236619">
    <molecule id="Q8VXZ9-1"/>
</dbReference>
<dbReference type="EnsemblPlants" id="AT5G19350.1">
    <molecule id="Q8VXZ9-1"/>
    <property type="protein sequence ID" value="AT5G19350.1"/>
    <property type="gene ID" value="AT5G19350"/>
</dbReference>
<dbReference type="EnsemblPlants" id="AT5G19350.2">
    <molecule id="Q8VXZ9-2"/>
    <property type="protein sequence ID" value="AT5G19350.2"/>
    <property type="gene ID" value="AT5G19350"/>
</dbReference>
<dbReference type="GeneID" id="832055"/>
<dbReference type="Gramene" id="AT5G19350.1">
    <molecule id="Q8VXZ9-1"/>
    <property type="protein sequence ID" value="AT5G19350.1"/>
    <property type="gene ID" value="AT5G19350"/>
</dbReference>
<dbReference type="Gramene" id="AT5G19350.2">
    <molecule id="Q8VXZ9-2"/>
    <property type="protein sequence ID" value="AT5G19350.2"/>
    <property type="gene ID" value="AT5G19350"/>
</dbReference>
<dbReference type="KEGG" id="ath:AT5G19350"/>
<dbReference type="Araport" id="AT5G19350"/>
<dbReference type="TAIR" id="AT5G19350"/>
<dbReference type="eggNOG" id="KOG0118">
    <property type="taxonomic scope" value="Eukaryota"/>
</dbReference>
<dbReference type="InParanoid" id="Q8VXZ9"/>
<dbReference type="OMA" id="YVKIPAN"/>
<dbReference type="OrthoDB" id="446113at2759"/>
<dbReference type="PhylomeDB" id="Q8VXZ9"/>
<dbReference type="PRO" id="PR:Q8VXZ9"/>
<dbReference type="Proteomes" id="UP000006548">
    <property type="component" value="Chromosome 5"/>
</dbReference>
<dbReference type="ExpressionAtlas" id="Q8VXZ9">
    <property type="expression patterns" value="baseline and differential"/>
</dbReference>
<dbReference type="GO" id="GO:0010494">
    <property type="term" value="C:cytoplasmic stress granule"/>
    <property type="evidence" value="ECO:0000250"/>
    <property type="project" value="UniProtKB"/>
</dbReference>
<dbReference type="GO" id="GO:0005634">
    <property type="term" value="C:nucleus"/>
    <property type="evidence" value="ECO:0000250"/>
    <property type="project" value="UniProtKB"/>
</dbReference>
<dbReference type="GO" id="GO:0005685">
    <property type="term" value="C:U1 snRNP"/>
    <property type="evidence" value="ECO:0000314"/>
    <property type="project" value="TAIR"/>
</dbReference>
<dbReference type="GO" id="GO:0003729">
    <property type="term" value="F:mRNA binding"/>
    <property type="evidence" value="ECO:0000314"/>
    <property type="project" value="TAIR"/>
</dbReference>
<dbReference type="GO" id="GO:0008143">
    <property type="term" value="F:poly(A) binding"/>
    <property type="evidence" value="ECO:0000250"/>
    <property type="project" value="UniProtKB"/>
</dbReference>
<dbReference type="GO" id="GO:0034605">
    <property type="term" value="P:cellular response to heat"/>
    <property type="evidence" value="ECO:0000250"/>
    <property type="project" value="UniProtKB"/>
</dbReference>
<dbReference type="GO" id="GO:0000398">
    <property type="term" value="P:mRNA splicing, via spliceosome"/>
    <property type="evidence" value="ECO:0000315"/>
    <property type="project" value="TAIR"/>
</dbReference>
<dbReference type="CDD" id="cd12344">
    <property type="entry name" value="RRM1_SECp43_like"/>
    <property type="match status" value="1"/>
</dbReference>
<dbReference type="CDD" id="cd12345">
    <property type="entry name" value="RRM2_SECp43_like"/>
    <property type="match status" value="1"/>
</dbReference>
<dbReference type="FunFam" id="3.30.70.330:FF:000405">
    <property type="entry name" value="polyadenylate-binding protein RBP45"/>
    <property type="match status" value="1"/>
</dbReference>
<dbReference type="FunFam" id="3.30.70.330:FF:000103">
    <property type="entry name" value="Polyadenylate-binding protein RBP47B"/>
    <property type="match status" value="1"/>
</dbReference>
<dbReference type="FunFam" id="3.30.70.330:FF:000144">
    <property type="entry name" value="Polyadenylate-binding protein RBP47B"/>
    <property type="match status" value="1"/>
</dbReference>
<dbReference type="Gene3D" id="3.30.70.330">
    <property type="match status" value="3"/>
</dbReference>
<dbReference type="InterPro" id="IPR012677">
    <property type="entry name" value="Nucleotide-bd_a/b_plait_sf"/>
</dbReference>
<dbReference type="InterPro" id="IPR035979">
    <property type="entry name" value="RBD_domain_sf"/>
</dbReference>
<dbReference type="InterPro" id="IPR050825">
    <property type="entry name" value="RBM42_RBP45_47-like"/>
</dbReference>
<dbReference type="InterPro" id="IPR000504">
    <property type="entry name" value="RRM_dom"/>
</dbReference>
<dbReference type="PANTHER" id="PTHR47640:SF16">
    <property type="entry name" value="POLYADENYLATE-BINDING PROTEIN RBP47C-RELATED"/>
    <property type="match status" value="1"/>
</dbReference>
<dbReference type="PANTHER" id="PTHR47640">
    <property type="entry name" value="TRNA SELENOCYSTEINE 1-ASSOCIATED PROTEIN 1-RELATED-RELATED"/>
    <property type="match status" value="1"/>
</dbReference>
<dbReference type="Pfam" id="PF00076">
    <property type="entry name" value="RRM_1"/>
    <property type="match status" value="3"/>
</dbReference>
<dbReference type="SMART" id="SM00360">
    <property type="entry name" value="RRM"/>
    <property type="match status" value="3"/>
</dbReference>
<dbReference type="SUPFAM" id="SSF54928">
    <property type="entry name" value="RNA-binding domain, RBD"/>
    <property type="match status" value="2"/>
</dbReference>
<dbReference type="PROSITE" id="PS50102">
    <property type="entry name" value="RRM"/>
    <property type="match status" value="3"/>
</dbReference>
<protein>
    <recommendedName>
        <fullName>Polyadenylate-binding protein RBP47B'</fullName>
        <shortName>Poly(A)-binding protein RBP47B'</shortName>
    </recommendedName>
    <alternativeName>
        <fullName>RNA-binding protein 47B'</fullName>
        <shortName>AtRBP47B prime</shortName>
        <shortName>AtRBP47B'</shortName>
    </alternativeName>
</protein>
<accession>Q8VXZ9</accession>
<accession>F4K135</accession>
<organism>
    <name type="scientific">Arabidopsis thaliana</name>
    <name type="common">Mouse-ear cress</name>
    <dbReference type="NCBI Taxonomy" id="3702"/>
    <lineage>
        <taxon>Eukaryota</taxon>
        <taxon>Viridiplantae</taxon>
        <taxon>Streptophyta</taxon>
        <taxon>Embryophyta</taxon>
        <taxon>Tracheophyta</taxon>
        <taxon>Spermatophyta</taxon>
        <taxon>Magnoliopsida</taxon>
        <taxon>eudicotyledons</taxon>
        <taxon>Gunneridae</taxon>
        <taxon>Pentapetalae</taxon>
        <taxon>rosids</taxon>
        <taxon>malvids</taxon>
        <taxon>Brassicales</taxon>
        <taxon>Brassicaceae</taxon>
        <taxon>Camelineae</taxon>
        <taxon>Arabidopsis</taxon>
    </lineage>
</organism>